<dbReference type="EMBL" id="CP000026">
    <property type="protein sequence ID" value="AAV79075.1"/>
    <property type="molecule type" value="Genomic_DNA"/>
</dbReference>
<dbReference type="RefSeq" id="WP_000462905.1">
    <property type="nucleotide sequence ID" value="NC_006511.1"/>
</dbReference>
<dbReference type="SMR" id="Q5PJW3"/>
<dbReference type="GeneID" id="98390389"/>
<dbReference type="KEGG" id="spt:SPA3252"/>
<dbReference type="HOGENOM" id="CLU_158040_3_0_6"/>
<dbReference type="Proteomes" id="UP000008185">
    <property type="component" value="Chromosome"/>
</dbReference>
<dbReference type="GO" id="GO:0003700">
    <property type="term" value="F:DNA-binding transcription factor activity"/>
    <property type="evidence" value="ECO:0007669"/>
    <property type="project" value="UniProtKB-UniRule"/>
</dbReference>
<dbReference type="GO" id="GO:0043565">
    <property type="term" value="F:sequence-specific DNA binding"/>
    <property type="evidence" value="ECO:0007669"/>
    <property type="project" value="InterPro"/>
</dbReference>
<dbReference type="FunFam" id="1.10.10.60:FF:000006">
    <property type="entry name" value="DNA-binding protein Fis"/>
    <property type="match status" value="1"/>
</dbReference>
<dbReference type="Gene3D" id="1.10.10.60">
    <property type="entry name" value="Homeodomain-like"/>
    <property type="match status" value="1"/>
</dbReference>
<dbReference type="HAMAP" id="MF_00166">
    <property type="entry name" value="DNA_binding_Fis"/>
    <property type="match status" value="1"/>
</dbReference>
<dbReference type="InterPro" id="IPR005412">
    <property type="entry name" value="Fis_DNA-bd"/>
</dbReference>
<dbReference type="InterPro" id="IPR009057">
    <property type="entry name" value="Homeodomain-like_sf"/>
</dbReference>
<dbReference type="InterPro" id="IPR002197">
    <property type="entry name" value="HTH_Fis"/>
</dbReference>
<dbReference type="InterPro" id="IPR050207">
    <property type="entry name" value="Trans_regulatory_Fis"/>
</dbReference>
<dbReference type="NCBIfam" id="NF001659">
    <property type="entry name" value="PRK00430.1"/>
    <property type="match status" value="1"/>
</dbReference>
<dbReference type="PANTHER" id="PTHR47918">
    <property type="entry name" value="DNA-BINDING PROTEIN FIS"/>
    <property type="match status" value="1"/>
</dbReference>
<dbReference type="PANTHER" id="PTHR47918:SF1">
    <property type="entry name" value="DNA-BINDING PROTEIN FIS"/>
    <property type="match status" value="1"/>
</dbReference>
<dbReference type="Pfam" id="PF02954">
    <property type="entry name" value="HTH_8"/>
    <property type="match status" value="1"/>
</dbReference>
<dbReference type="PIRSF" id="PIRSF002097">
    <property type="entry name" value="DNA-binding_Fis"/>
    <property type="match status" value="1"/>
</dbReference>
<dbReference type="PRINTS" id="PR01591">
    <property type="entry name" value="DNABINDNGFIS"/>
</dbReference>
<dbReference type="PRINTS" id="PR01590">
    <property type="entry name" value="HTHFIS"/>
</dbReference>
<dbReference type="SUPFAM" id="SSF46689">
    <property type="entry name" value="Homeodomain-like"/>
    <property type="match status" value="1"/>
</dbReference>
<evidence type="ECO:0000255" key="1">
    <source>
        <dbReference type="HAMAP-Rule" id="MF_00166"/>
    </source>
</evidence>
<accession>Q5PJW3</accession>
<feature type="chain" id="PRO_0000203892" description="DNA-binding protein Fis">
    <location>
        <begin position="1"/>
        <end position="98"/>
    </location>
</feature>
<feature type="DNA-binding region" description="H-T-H motif" evidence="1">
    <location>
        <begin position="74"/>
        <end position="93"/>
    </location>
</feature>
<name>FIS_SALPA</name>
<protein>
    <recommendedName>
        <fullName evidence="1">DNA-binding protein Fis</fullName>
    </recommendedName>
</protein>
<keyword id="KW-0010">Activator</keyword>
<keyword id="KW-0238">DNA-binding</keyword>
<keyword id="KW-0804">Transcription</keyword>
<keyword id="KW-0805">Transcription regulation</keyword>
<proteinExistence type="inferred from homology"/>
<sequence length="98" mass="11240">MFEQRVNSDVLTVSTVNSQDQVTQKPLRDSVKQALKNYFAQLNGQDVNDLYELVLAEVEQPLLDMVMQYTRGNQTRAALMMGINRGTLRKKLKKYGMN</sequence>
<gene>
    <name evidence="1" type="primary">fis</name>
    <name type="ordered locus">SPA3252</name>
</gene>
<comment type="function">
    <text evidence="1">Activates ribosomal RNA transcription. Plays a direct role in upstream activation of rRNA promoters.</text>
</comment>
<comment type="subunit">
    <text evidence="1">Homodimer.</text>
</comment>
<comment type="similarity">
    <text evidence="1">Belongs to the transcriptional regulatory Fis family.</text>
</comment>
<reference key="1">
    <citation type="journal article" date="2004" name="Nat. Genet.">
        <title>Comparison of genome degradation in Paratyphi A and Typhi, human-restricted serovars of Salmonella enterica that cause typhoid.</title>
        <authorList>
            <person name="McClelland M."/>
            <person name="Sanderson K.E."/>
            <person name="Clifton S.W."/>
            <person name="Latreille P."/>
            <person name="Porwollik S."/>
            <person name="Sabo A."/>
            <person name="Meyer R."/>
            <person name="Bieri T."/>
            <person name="Ozersky P."/>
            <person name="McLellan M."/>
            <person name="Harkins C.R."/>
            <person name="Wang C."/>
            <person name="Nguyen C."/>
            <person name="Berghoff A."/>
            <person name="Elliott G."/>
            <person name="Kohlberg S."/>
            <person name="Strong C."/>
            <person name="Du F."/>
            <person name="Carter J."/>
            <person name="Kremizki C."/>
            <person name="Layman D."/>
            <person name="Leonard S."/>
            <person name="Sun H."/>
            <person name="Fulton L."/>
            <person name="Nash W."/>
            <person name="Miner T."/>
            <person name="Minx P."/>
            <person name="Delehaunty K."/>
            <person name="Fronick C."/>
            <person name="Magrini V."/>
            <person name="Nhan M."/>
            <person name="Warren W."/>
            <person name="Florea L."/>
            <person name="Spieth J."/>
            <person name="Wilson R.K."/>
        </authorList>
    </citation>
    <scope>NUCLEOTIDE SEQUENCE [LARGE SCALE GENOMIC DNA]</scope>
    <source>
        <strain>ATCC 9150 / SARB42</strain>
    </source>
</reference>
<organism>
    <name type="scientific">Salmonella paratyphi A (strain ATCC 9150 / SARB42)</name>
    <dbReference type="NCBI Taxonomy" id="295319"/>
    <lineage>
        <taxon>Bacteria</taxon>
        <taxon>Pseudomonadati</taxon>
        <taxon>Pseudomonadota</taxon>
        <taxon>Gammaproteobacteria</taxon>
        <taxon>Enterobacterales</taxon>
        <taxon>Enterobacteriaceae</taxon>
        <taxon>Salmonella</taxon>
    </lineage>
</organism>